<accession>Q2G0B6</accession>
<gene>
    <name type="ordered locus">SAOUHSC_00689</name>
</gene>
<comment type="similarity">
    <text evidence="1">Belongs to the UPF0178 family.</text>
</comment>
<feature type="chain" id="PRO_1000014450" description="UPF0178 protein SAOUHSC_00689">
    <location>
        <begin position="1"/>
        <end position="152"/>
    </location>
</feature>
<keyword id="KW-1185">Reference proteome</keyword>
<dbReference type="EMBL" id="CP000253">
    <property type="protein sequence ID" value="ABD29822.1"/>
    <property type="molecule type" value="Genomic_DNA"/>
</dbReference>
<dbReference type="RefSeq" id="WP_000148828.1">
    <property type="nucleotide sequence ID" value="NZ_LS483365.1"/>
</dbReference>
<dbReference type="RefSeq" id="YP_499248.1">
    <property type="nucleotide sequence ID" value="NC_007795.1"/>
</dbReference>
<dbReference type="SMR" id="Q2G0B6"/>
<dbReference type="STRING" id="93061.SAOUHSC_00689"/>
<dbReference type="PaxDb" id="1280-SAXN108_0750"/>
<dbReference type="GeneID" id="3920993"/>
<dbReference type="KEGG" id="sao:SAOUHSC_00689"/>
<dbReference type="PATRIC" id="fig|93061.5.peg.619"/>
<dbReference type="eggNOG" id="COG1671">
    <property type="taxonomic scope" value="Bacteria"/>
</dbReference>
<dbReference type="HOGENOM" id="CLU_106619_0_0_9"/>
<dbReference type="OrthoDB" id="9798918at2"/>
<dbReference type="PRO" id="PR:Q2G0B6"/>
<dbReference type="Proteomes" id="UP000008816">
    <property type="component" value="Chromosome"/>
</dbReference>
<dbReference type="HAMAP" id="MF_00489">
    <property type="entry name" value="UPF0178"/>
    <property type="match status" value="1"/>
</dbReference>
<dbReference type="InterPro" id="IPR003791">
    <property type="entry name" value="UPF0178"/>
</dbReference>
<dbReference type="NCBIfam" id="NF001095">
    <property type="entry name" value="PRK00124.1"/>
    <property type="match status" value="1"/>
</dbReference>
<dbReference type="PANTHER" id="PTHR35146">
    <property type="entry name" value="UPF0178 PROTEIN YAII"/>
    <property type="match status" value="1"/>
</dbReference>
<dbReference type="PANTHER" id="PTHR35146:SF1">
    <property type="entry name" value="UPF0178 PROTEIN YAII"/>
    <property type="match status" value="1"/>
</dbReference>
<dbReference type="Pfam" id="PF02639">
    <property type="entry name" value="DUF188"/>
    <property type="match status" value="1"/>
</dbReference>
<evidence type="ECO:0000255" key="1">
    <source>
        <dbReference type="HAMAP-Rule" id="MF_00489"/>
    </source>
</evidence>
<organism>
    <name type="scientific">Staphylococcus aureus (strain NCTC 8325 / PS 47)</name>
    <dbReference type="NCBI Taxonomy" id="93061"/>
    <lineage>
        <taxon>Bacteria</taxon>
        <taxon>Bacillati</taxon>
        <taxon>Bacillota</taxon>
        <taxon>Bacilli</taxon>
        <taxon>Bacillales</taxon>
        <taxon>Staphylococcaceae</taxon>
        <taxon>Staphylococcus</taxon>
    </lineage>
</organism>
<proteinExistence type="inferred from homology"/>
<reference key="1">
    <citation type="book" date="2006" name="Gram positive pathogens, 2nd edition">
        <title>The Staphylococcus aureus NCTC 8325 genome.</title>
        <editorList>
            <person name="Fischetti V."/>
            <person name="Novick R."/>
            <person name="Ferretti J."/>
            <person name="Portnoy D."/>
            <person name="Rood J."/>
        </editorList>
        <authorList>
            <person name="Gillaspy A.F."/>
            <person name="Worrell V."/>
            <person name="Orvis J."/>
            <person name="Roe B.A."/>
            <person name="Dyer D.W."/>
            <person name="Iandolo J.J."/>
        </authorList>
    </citation>
    <scope>NUCLEOTIDE SEQUENCE [LARGE SCALE GENOMIC DNA]</scope>
    <source>
        <strain>NCTC 8325 / PS 47</strain>
    </source>
</reference>
<protein>
    <recommendedName>
        <fullName evidence="1">UPF0178 protein SAOUHSC_00689</fullName>
    </recommendedName>
</protein>
<sequence length="152" mass="17258">MTHIIIDGDACPVVDSIIDLTTETGIFVTIIRSFSHFSNQLYPPHVSTLYVDDGPDAVDYKIVQLSTKDDIVVTQDYGLASLLVDKVLIVMHHNGKIYNSKNIQQLLDKRYMNAQIRKQGGRHKGPPPFTKQDQKVFEQSLLKVIHRIKELD</sequence>
<name>Y689_STAA8</name>